<organism>
    <name type="scientific">Escherichia coli O6:H1 (strain CFT073 / ATCC 700928 / UPEC)</name>
    <dbReference type="NCBI Taxonomy" id="199310"/>
    <lineage>
        <taxon>Bacteria</taxon>
        <taxon>Pseudomonadati</taxon>
        <taxon>Pseudomonadota</taxon>
        <taxon>Gammaproteobacteria</taxon>
        <taxon>Enterobacterales</taxon>
        <taxon>Enterobacteriaceae</taxon>
        <taxon>Escherichia</taxon>
    </lineage>
</organism>
<dbReference type="EMBL" id="AE014075">
    <property type="protein sequence ID" value="AAN78868.1"/>
    <property type="molecule type" value="Genomic_DNA"/>
</dbReference>
<dbReference type="RefSeq" id="WP_000174685.1">
    <property type="nucleotide sequence ID" value="NZ_CP051263.1"/>
</dbReference>
<dbReference type="SMR" id="Q8FKM4"/>
<dbReference type="STRING" id="199310.c0387"/>
<dbReference type="KEGG" id="ecc:c0387"/>
<dbReference type="eggNOG" id="ENOG502ZQ8E">
    <property type="taxonomic scope" value="Bacteria"/>
</dbReference>
<dbReference type="HOGENOM" id="CLU_136773_0_0_6"/>
<dbReference type="BioCyc" id="ECOL199310:C0387-MONOMER"/>
<dbReference type="Proteomes" id="UP000001410">
    <property type="component" value="Chromosome"/>
</dbReference>
<dbReference type="GO" id="GO:0005737">
    <property type="term" value="C:cytoplasm"/>
    <property type="evidence" value="ECO:0007669"/>
    <property type="project" value="UniProtKB-SubCell"/>
</dbReference>
<dbReference type="GO" id="GO:0045893">
    <property type="term" value="P:positive regulation of DNA-templated transcription"/>
    <property type="evidence" value="ECO:0007669"/>
    <property type="project" value="UniProtKB-UniRule"/>
</dbReference>
<dbReference type="FunFam" id="3.30.310.230:FF:000001">
    <property type="entry name" value="Sigma factor-binding protein Crl"/>
    <property type="match status" value="1"/>
</dbReference>
<dbReference type="Gene3D" id="3.30.310.230">
    <property type="entry name" value="Sigma factor-binding protein Crl monomer"/>
    <property type="match status" value="1"/>
</dbReference>
<dbReference type="HAMAP" id="MF_01178">
    <property type="entry name" value="Crl"/>
    <property type="match status" value="1"/>
</dbReference>
<dbReference type="InterPro" id="IPR009986">
    <property type="entry name" value="Tscrpt_reg_Crl"/>
</dbReference>
<dbReference type="InterPro" id="IPR038208">
    <property type="entry name" value="Tscrpt_reg_Crl_sf"/>
</dbReference>
<dbReference type="NCBIfam" id="NF008217">
    <property type="entry name" value="PRK10984.1"/>
    <property type="match status" value="1"/>
</dbReference>
<dbReference type="Pfam" id="PF07417">
    <property type="entry name" value="Crl"/>
    <property type="match status" value="1"/>
</dbReference>
<reference key="1">
    <citation type="journal article" date="2002" name="Proc. Natl. Acad. Sci. U.S.A.">
        <title>Extensive mosaic structure revealed by the complete genome sequence of uropathogenic Escherichia coli.</title>
        <authorList>
            <person name="Welch R.A."/>
            <person name="Burland V."/>
            <person name="Plunkett G. III"/>
            <person name="Redford P."/>
            <person name="Roesch P."/>
            <person name="Rasko D."/>
            <person name="Buckles E.L."/>
            <person name="Liou S.-R."/>
            <person name="Boutin A."/>
            <person name="Hackett J."/>
            <person name="Stroud D."/>
            <person name="Mayhew G.F."/>
            <person name="Rose D.J."/>
            <person name="Zhou S."/>
            <person name="Schwartz D.C."/>
            <person name="Perna N.T."/>
            <person name="Mobley H.L.T."/>
            <person name="Donnenberg M.S."/>
            <person name="Blattner F.R."/>
        </authorList>
    </citation>
    <scope>NUCLEOTIDE SEQUENCE [LARGE SCALE GENOMIC DNA]</scope>
    <source>
        <strain>CFT073 / ATCC 700928 / UPEC</strain>
    </source>
</reference>
<name>CRL_ECOL6</name>
<evidence type="ECO:0000250" key="1"/>
<evidence type="ECO:0000255" key="2">
    <source>
        <dbReference type="HAMAP-Rule" id="MF_01178"/>
    </source>
</evidence>
<comment type="function">
    <text evidence="2">Binds to the sigma-S subunit of RNA polymerase, activating expression of sigma-S-regulated genes. Stimulates RNA polymerase holoenzyme formation and may bind to several other sigma factors, such as sigma-70 and sigma-32.</text>
</comment>
<comment type="subcellular location">
    <subcellularLocation>
        <location evidence="2">Cytoplasm</location>
    </subcellularLocation>
</comment>
<comment type="similarity">
    <text evidence="2">Belongs to the Crl family.</text>
</comment>
<gene>
    <name evidence="2" type="primary">crl</name>
    <name type="ordered locus">c0387</name>
</gene>
<protein>
    <recommendedName>
        <fullName evidence="2">Sigma factor-binding protein Crl</fullName>
    </recommendedName>
</protein>
<accession>Q8FKM4</accession>
<sequence length="133" mass="15642">MTLPSGHPKSRLIKKFTALGPYIREGKCEDNRFFFDCLAVCVNVKPAPEVREFWGWWMELEAQESRFTYSYQFGLFDKAGDWTSVRIKDAEVVERLEHTLREFHEKLRELLATLNLKLEPADDFRDEPVKLTA</sequence>
<keyword id="KW-0010">Activator</keyword>
<keyword id="KW-0175">Coiled coil</keyword>
<keyword id="KW-0963">Cytoplasm</keyword>
<keyword id="KW-1185">Reference proteome</keyword>
<keyword id="KW-0804">Transcription</keyword>
<keyword id="KW-0805">Transcription regulation</keyword>
<proteinExistence type="inferred from homology"/>
<feature type="initiator methionine" description="Removed" evidence="1">
    <location>
        <position position="1"/>
    </location>
</feature>
<feature type="chain" id="PRO_0000268898" description="Sigma factor-binding protein Crl">
    <location>
        <begin position="2"/>
        <end position="133"/>
    </location>
</feature>
<feature type="region of interest" description="Essential for activity" evidence="2">
    <location>
        <begin position="99"/>
        <end position="122"/>
    </location>
</feature>
<feature type="coiled-coil region" evidence="2">
    <location>
        <begin position="90"/>
        <end position="116"/>
    </location>
</feature>